<organism>
    <name type="scientific">Acinetobacter baumannii (strain ACICU)</name>
    <dbReference type="NCBI Taxonomy" id="405416"/>
    <lineage>
        <taxon>Bacteria</taxon>
        <taxon>Pseudomonadati</taxon>
        <taxon>Pseudomonadota</taxon>
        <taxon>Gammaproteobacteria</taxon>
        <taxon>Moraxellales</taxon>
        <taxon>Moraxellaceae</taxon>
        <taxon>Acinetobacter</taxon>
        <taxon>Acinetobacter calcoaceticus/baumannii complex</taxon>
    </lineage>
</organism>
<sequence>MLALISPAKTLDYETALPTDEFTQPRLLEHSAQLIDVCRKLSASEIASLMSVSEKIATLNADRFRDWKPEFDFSNARQAIYAFKGDVYTGLDAYHLKDKDIDFAQQHLRMLSGLYGLLRPLDLMMPYRLEMGTKLKNTRGHNLYEFWDDIITNRINEDLAAIKSELLVNLASDEYYKSVNEKKIKAEIVKPVFLDQKNGKYKVISFYAKKARGLMARFIIENQLNKAEDIKAFNTEGYYFDADNSSAKELVFKRDEQ</sequence>
<feature type="chain" id="PRO_1000131094" description="UPF0246 protein ACICU_02469">
    <location>
        <begin position="1"/>
        <end position="257"/>
    </location>
</feature>
<evidence type="ECO:0000255" key="1">
    <source>
        <dbReference type="HAMAP-Rule" id="MF_00652"/>
    </source>
</evidence>
<name>Y2469_ACIBC</name>
<protein>
    <recommendedName>
        <fullName evidence="1">UPF0246 protein ACICU_02469</fullName>
    </recommendedName>
</protein>
<proteinExistence type="inferred from homology"/>
<gene>
    <name type="ordered locus">ACICU_02469</name>
</gene>
<comment type="similarity">
    <text evidence="1">Belongs to the UPF0246 family.</text>
</comment>
<dbReference type="EMBL" id="CP000863">
    <property type="protein sequence ID" value="ACC57781.1"/>
    <property type="molecule type" value="Genomic_DNA"/>
</dbReference>
<dbReference type="SMR" id="B2HUV1"/>
<dbReference type="KEGG" id="abc:ACICU_02469"/>
<dbReference type="HOGENOM" id="CLU_061989_0_0_6"/>
<dbReference type="Proteomes" id="UP000008839">
    <property type="component" value="Chromosome"/>
</dbReference>
<dbReference type="GO" id="GO:0005829">
    <property type="term" value="C:cytosol"/>
    <property type="evidence" value="ECO:0007669"/>
    <property type="project" value="TreeGrafter"/>
</dbReference>
<dbReference type="GO" id="GO:0033194">
    <property type="term" value="P:response to hydroperoxide"/>
    <property type="evidence" value="ECO:0007669"/>
    <property type="project" value="TreeGrafter"/>
</dbReference>
<dbReference type="HAMAP" id="MF_00652">
    <property type="entry name" value="UPF0246"/>
    <property type="match status" value="1"/>
</dbReference>
<dbReference type="InterPro" id="IPR005583">
    <property type="entry name" value="YaaA"/>
</dbReference>
<dbReference type="NCBIfam" id="NF002541">
    <property type="entry name" value="PRK02101.1-1"/>
    <property type="match status" value="1"/>
</dbReference>
<dbReference type="NCBIfam" id="NF002542">
    <property type="entry name" value="PRK02101.1-3"/>
    <property type="match status" value="1"/>
</dbReference>
<dbReference type="PANTHER" id="PTHR30283:SF4">
    <property type="entry name" value="PEROXIDE STRESS RESISTANCE PROTEIN YAAA"/>
    <property type="match status" value="1"/>
</dbReference>
<dbReference type="PANTHER" id="PTHR30283">
    <property type="entry name" value="PEROXIDE STRESS RESPONSE PROTEIN YAAA"/>
    <property type="match status" value="1"/>
</dbReference>
<dbReference type="Pfam" id="PF03883">
    <property type="entry name" value="H2O2_YaaD"/>
    <property type="match status" value="1"/>
</dbReference>
<reference key="1">
    <citation type="journal article" date="2008" name="Antimicrob. Agents Chemother.">
        <title>Whole-genome pyrosequencing of an epidemic multidrug-resistant Acinetobacter baumannii strain belonging to the European clone II group.</title>
        <authorList>
            <person name="Iacono M."/>
            <person name="Villa L."/>
            <person name="Fortini D."/>
            <person name="Bordoni R."/>
            <person name="Imperi F."/>
            <person name="Bonnal R.J."/>
            <person name="Sicheritz-Ponten T."/>
            <person name="De Bellis G."/>
            <person name="Visca P."/>
            <person name="Cassone A."/>
            <person name="Carattoli A."/>
        </authorList>
    </citation>
    <scope>NUCLEOTIDE SEQUENCE [LARGE SCALE GENOMIC DNA]</scope>
    <source>
        <strain>ACICU</strain>
    </source>
</reference>
<accession>B2HUV1</accession>